<reference key="1">
    <citation type="journal article" date="1991" name="FEBS Lett.">
        <title>Cloning of the D-lactate dehydrogenase gene from Lactobacillus delbrueckii subsp. bulgaricus by complementation in Escherichia coli.</title>
        <authorList>
            <person name="Bernard N."/>
            <person name="Ferain T."/>
            <person name="Garmyn D."/>
            <person name="Hols P."/>
            <person name="Delcour J."/>
        </authorList>
    </citation>
    <scope>NUCLEOTIDE SEQUENCE [GENOMIC DNA]</scope>
</reference>
<reference key="2">
    <citation type="journal article" date="1992" name="J. Biol. Chem.">
        <title>Primary structure, physicochemical properties, and chemical modification of NAD(+)-dependent D-lactate dehydrogenase. Evidence for the presence of Arg-235, His-303, Tyr-101, and Trp-19 at or near the active site.</title>
        <authorList>
            <person name="Kochhar S."/>
            <person name="Hunziker P."/>
            <person name="Leong-Morgenthaler P.M."/>
            <person name="Hottinger H."/>
        </authorList>
    </citation>
    <scope>NUCLEOTIDE SEQUENCE [GENOMIC DNA]</scope>
    <scope>PARTIAL PROTEIN SEQUENCE</scope>
</reference>
<reference key="3">
    <citation type="journal article" date="1992" name="Biochem. Biophys. Res. Commun.">
        <title>Cloning and overexpression of the Lactobacillus bulgaricus NAD(+)-dependent D-lactate dehydrogenase gene in Escherichia coli: purification and characterization of the recombinant enzyme.</title>
        <authorList>
            <person name="Kochhar S."/>
            <person name="Chuard N."/>
            <person name="Hottinger H."/>
        </authorList>
    </citation>
    <scope>NUCLEOTIDE SEQUENCE [GENOMIC DNA]</scope>
</reference>
<reference key="4">
    <citation type="journal article" date="2006" name="Proc. Natl. Acad. Sci. U.S.A.">
        <title>The complete genome sequence of Lactobacillus bulgaricus reveals extensive and ongoing reductive evolution.</title>
        <authorList>
            <person name="van de Guchte M."/>
            <person name="Penaud S."/>
            <person name="Grimaldi C."/>
            <person name="Barbe V."/>
            <person name="Bryson K."/>
            <person name="Nicolas P."/>
            <person name="Robert C."/>
            <person name="Oztas S."/>
            <person name="Mangenot S."/>
            <person name="Couloux A."/>
            <person name="Loux V."/>
            <person name="Dervyn R."/>
            <person name="Bossy R."/>
            <person name="Bolotin A."/>
            <person name="Batto J.-M."/>
            <person name="Walunas T."/>
            <person name="Gibrat J.-F."/>
            <person name="Bessieres P."/>
            <person name="Weissenbach J."/>
            <person name="Ehrlich S.D."/>
            <person name="Maguin E."/>
        </authorList>
    </citation>
    <scope>NUCLEOTIDE SEQUENCE [LARGE SCALE GENOMIC DNA]</scope>
    <source>
        <strain>ATCC 11842 / DSM 20081 / BCRC 10696 / JCM 1002 / NBRC 13953 / NCIMB 11778 / NCTC 12712 / WDCM 00102 / Lb 14</strain>
    </source>
</reference>
<reference key="5">
    <citation type="journal article" date="1992" name="Biochem. Biophys. Res. Commun.">
        <title>Evolutionary relationship of NAD(+)-dependent D-lactate dehydrogenase: comparison of primary structure of 2-hydroxy acid dehydrogenases.</title>
        <authorList>
            <person name="Kochhar S."/>
            <person name="Hunziker P."/>
            <person name="Leong-Morgenthaler P.M."/>
            <person name="Hottinger H."/>
        </authorList>
    </citation>
    <scope>SIMILARITY TO OTHER ENZYMES OF THIS FAMILY</scope>
</reference>
<reference key="6">
    <citation type="journal article" date="1997" name="Eur. J. Biochem.">
        <title>D-2-hydroxy-4-methylvalerate dehydrogenase from Lactobacillus delbrueckii subsp. bulgaricus. II. Mutagenic analysis of catalytically important residues.</title>
        <authorList>
            <person name="Bernard N."/>
            <person name="Johnsen K."/>
            <person name="Gelpi J.L."/>
            <person name="Alvarez J.A."/>
            <person name="Ferain T."/>
            <person name="Garmyn D."/>
            <person name="Hols P."/>
            <person name="Cortes A."/>
            <person name="Clarke A.R."/>
            <person name="Holbrook J.J."/>
            <person name="Delcour J."/>
        </authorList>
    </citation>
    <scope>ACTIVE SITE</scope>
    <scope>MUTAGENESIS OF HIS-206; ARG-236; ASP-260; GLU-265 AND HIS-297</scope>
</reference>
<reference key="7">
    <citation type="journal article" date="1993" name="Biochem. Biophys. Res. Commun.">
        <title>Prediction of structurally conserved regions of D-specific hydroxy acid dehydrogenases by multiple alignment with formate dehydrogenase.</title>
        <authorList>
            <person name="Vinals C."/>
            <person name="Depiereux E."/>
            <person name="Feytmans E."/>
        </authorList>
    </citation>
    <scope>3D-STRUCTURE MODELING</scope>
</reference>
<reference key="8">
    <citation type="journal article" date="2002" name="J. Mol. Biol.">
        <title>Domain closure, substrate specificity and catalysis of D-lactate dehydrogenase from Lactobacillus bulgaricus.</title>
        <authorList>
            <person name="Razeto A."/>
            <person name="Kochhar S."/>
            <person name="Hottinger H."/>
            <person name="Dauter M."/>
            <person name="Wilson K.S."/>
            <person name="Lamzin V.S."/>
        </authorList>
    </citation>
    <scope>X-RAY CRYSTALLOGRAPHY (1.9 ANGSTROMS) IN COMPLEX WITH NAD</scope>
    <scope>SUBUNIT</scope>
</reference>
<protein>
    <recommendedName>
        <fullName>D-lactate dehydrogenase</fullName>
        <shortName>D-LDH</shortName>
        <ecNumber>1.1.1.28</ecNumber>
    </recommendedName>
    <alternativeName>
        <fullName>D-specific 2-hydroxyacid dehydrogenase</fullName>
    </alternativeName>
</protein>
<proteinExistence type="evidence at protein level"/>
<gene>
    <name type="primary">ldhA</name>
    <name type="ordered locus">Ldb0101</name>
</gene>
<accession>P26297</accession>
<accession>Q1G7V7</accession>
<feature type="initiator methionine" description="Removed">
    <location>
        <position position="1"/>
    </location>
</feature>
<feature type="chain" id="PRO_0000075953" description="D-lactate dehydrogenase">
    <location>
        <begin position="2"/>
        <end position="333"/>
    </location>
</feature>
<feature type="active site" evidence="5">
    <location>
        <position position="236"/>
    </location>
</feature>
<feature type="active site" evidence="5">
    <location>
        <position position="265"/>
    </location>
</feature>
<feature type="active site" description="Proton donor" evidence="5">
    <location>
        <position position="297"/>
    </location>
</feature>
<feature type="binding site" evidence="1 6">
    <location>
        <begin position="156"/>
        <end position="157"/>
    </location>
    <ligand>
        <name>NAD(+)</name>
        <dbReference type="ChEBI" id="CHEBI:57540"/>
    </ligand>
</feature>
<feature type="binding site" evidence="1 6">
    <location>
        <position position="176"/>
    </location>
    <ligand>
        <name>NAD(+)</name>
        <dbReference type="ChEBI" id="CHEBI:57540"/>
    </ligand>
</feature>
<feature type="binding site" evidence="1">
    <location>
        <begin position="207"/>
        <end position="208"/>
    </location>
    <ligand>
        <name>NAD(+)</name>
        <dbReference type="ChEBI" id="CHEBI:57540"/>
    </ligand>
</feature>
<feature type="binding site" evidence="1 6">
    <location>
        <position position="213"/>
    </location>
    <ligand>
        <name>NAD(+)</name>
        <dbReference type="ChEBI" id="CHEBI:57540"/>
    </ligand>
</feature>
<feature type="binding site" evidence="4">
    <location>
        <begin position="234"/>
        <end position="236"/>
    </location>
    <ligand>
        <name>NAD(+)</name>
        <dbReference type="ChEBI" id="CHEBI:57540"/>
    </ligand>
</feature>
<feature type="binding site" evidence="1 6">
    <location>
        <position position="260"/>
    </location>
    <ligand>
        <name>NAD(+)</name>
        <dbReference type="ChEBI" id="CHEBI:57540"/>
    </ligand>
</feature>
<feature type="mutagenesis site" description="Increase of activity." evidence="2">
    <original>H</original>
    <variation>Q</variation>
    <location>
        <position position="206"/>
    </location>
</feature>
<feature type="mutagenesis site" description="Decrease of activity." evidence="2">
    <original>R</original>
    <variation>K</variation>
    <location>
        <position position="236"/>
    </location>
</feature>
<feature type="mutagenesis site" description="Decrease of activity." evidence="2">
    <original>D</original>
    <variation>N</variation>
    <location>
        <position position="260"/>
    </location>
</feature>
<feature type="mutagenesis site" description="Decrease of activity." evidence="2">
    <original>E</original>
    <variation>Q</variation>
    <location>
        <position position="265"/>
    </location>
</feature>
<feature type="mutagenesis site" description="90% loss of activity." evidence="2">
    <original>H</original>
    <variation>Q</variation>
    <location>
        <position position="297"/>
    </location>
</feature>
<feature type="sequence conflict" description="In Ref. 2; AAA25246." evidence="3" ref="2">
    <original>V</original>
    <variation>A</variation>
    <location>
        <position position="41"/>
    </location>
</feature>
<feature type="sequence conflict" description="In Ref. 1; CAA42781." evidence="3" ref="1">
    <original>R</original>
    <variation>A</variation>
    <location>
        <position position="117"/>
    </location>
</feature>
<feature type="sequence conflict" description="In Ref. 2; AAA25246." evidence="3" ref="2">
    <original>D</original>
    <variation>A</variation>
    <location>
        <position position="122"/>
    </location>
</feature>
<feature type="sequence conflict" description="In Ref. 2; AAA25246." evidence="3" ref="2">
    <original>I</original>
    <variation>V</variation>
    <location>
        <position position="152"/>
    </location>
</feature>
<feature type="sequence conflict" description="In Ref. 1; CAA42781." evidence="3" ref="1">
    <original>A</original>
    <variation>T</variation>
    <location>
        <position position="174"/>
    </location>
</feature>
<feature type="sequence conflict" description="In Ref. 2; AAA25246." evidence="3" ref="2">
    <original>E</original>
    <variation>K</variation>
    <location>
        <position position="220"/>
    </location>
</feature>
<feature type="sequence conflict" description="In Ref. 2; AAA25246." evidence="3" ref="2">
    <original>I</original>
    <variation>V</variation>
    <location>
        <position position="254"/>
    </location>
</feature>
<feature type="sequence conflict" description="In Ref. 2; AAA25246." evidence="3" ref="2">
    <original>I</original>
    <variation>V</variation>
    <location>
        <position position="268"/>
    </location>
</feature>
<feature type="sequence conflict" description="In Ref. 2; AAA25246." evidence="3" ref="2">
    <original>W</original>
    <variation>R</variation>
    <location>
        <position position="273"/>
    </location>
</feature>
<feature type="strand" evidence="7">
    <location>
        <begin position="3"/>
        <end position="6"/>
    </location>
</feature>
<feature type="helix" evidence="7">
    <location>
        <begin position="11"/>
        <end position="13"/>
    </location>
</feature>
<feature type="helix" evidence="7">
    <location>
        <begin position="14"/>
        <end position="22"/>
    </location>
</feature>
<feature type="strand" evidence="7">
    <location>
        <begin position="27"/>
        <end position="31"/>
    </location>
</feature>
<feature type="turn" evidence="7">
    <location>
        <begin position="38"/>
        <end position="40"/>
    </location>
</feature>
<feature type="helix" evidence="7">
    <location>
        <begin position="41"/>
        <end position="44"/>
    </location>
</feature>
<feature type="strand" evidence="7">
    <location>
        <begin position="48"/>
        <end position="52"/>
    </location>
</feature>
<feature type="helix" evidence="7">
    <location>
        <begin position="60"/>
        <end position="68"/>
    </location>
</feature>
<feature type="strand" evidence="7">
    <location>
        <begin position="73"/>
        <end position="79"/>
    </location>
</feature>
<feature type="helix" evidence="7">
    <location>
        <begin position="86"/>
        <end position="91"/>
    </location>
</feature>
<feature type="strand" evidence="7">
    <location>
        <begin position="95"/>
        <end position="97"/>
    </location>
</feature>
<feature type="helix" evidence="7">
    <location>
        <begin position="104"/>
        <end position="120"/>
    </location>
</feature>
<feature type="helix" evidence="7">
    <location>
        <begin position="122"/>
        <end position="130"/>
    </location>
</feature>
<feature type="helix" evidence="7">
    <location>
        <begin position="144"/>
        <end position="146"/>
    </location>
</feature>
<feature type="strand" evidence="7">
    <location>
        <begin position="147"/>
        <end position="152"/>
    </location>
</feature>
<feature type="helix" evidence="7">
    <location>
        <begin position="156"/>
        <end position="167"/>
    </location>
</feature>
<feature type="strand" evidence="7">
    <location>
        <begin position="171"/>
        <end position="175"/>
    </location>
</feature>
<feature type="helix" evidence="7">
    <location>
        <begin position="181"/>
        <end position="185"/>
    </location>
</feature>
<feature type="helix" evidence="7">
    <location>
        <begin position="193"/>
        <end position="199"/>
    </location>
</feature>
<feature type="strand" evidence="7">
    <location>
        <begin position="201"/>
        <end position="205"/>
    </location>
</feature>
<feature type="helix" evidence="7">
    <location>
        <begin position="211"/>
        <end position="213"/>
    </location>
</feature>
<feature type="helix" evidence="7">
    <location>
        <begin position="219"/>
        <end position="224"/>
    </location>
</feature>
<feature type="strand" evidence="7">
    <location>
        <begin position="229"/>
        <end position="233"/>
    </location>
</feature>
<feature type="helix" evidence="7">
    <location>
        <begin position="237"/>
        <end position="239"/>
    </location>
</feature>
<feature type="helix" evidence="7">
    <location>
        <begin position="242"/>
        <end position="250"/>
    </location>
</feature>
<feature type="strand" evidence="7">
    <location>
        <begin position="253"/>
        <end position="260"/>
    </location>
</feature>
<feature type="turn" evidence="7">
    <location>
        <begin position="266"/>
        <end position="270"/>
    </location>
</feature>
<feature type="helix" evidence="7">
    <location>
        <begin position="281"/>
        <end position="288"/>
    </location>
</feature>
<feature type="strand" evidence="7">
    <location>
        <begin position="292"/>
        <end position="294"/>
    </location>
</feature>
<feature type="helix" evidence="7">
    <location>
        <begin position="303"/>
        <end position="321"/>
    </location>
</feature>
<feature type="strand" evidence="7">
    <location>
        <begin position="327"/>
        <end position="329"/>
    </location>
</feature>
<organism>
    <name type="scientific">Lactobacillus delbrueckii subsp. bulgaricus (strain ATCC 11842 / DSM 20081 / BCRC 10696 / JCM 1002 / NBRC 13953 / NCIMB 11778 / NCTC 12712 / WDCM 00102 / Lb 14)</name>
    <dbReference type="NCBI Taxonomy" id="390333"/>
    <lineage>
        <taxon>Bacteria</taxon>
        <taxon>Bacillati</taxon>
        <taxon>Bacillota</taxon>
        <taxon>Bacilli</taxon>
        <taxon>Lactobacillales</taxon>
        <taxon>Lactobacillaceae</taxon>
        <taxon>Lactobacillus</taxon>
    </lineage>
</organism>
<keyword id="KW-0002">3D-structure</keyword>
<keyword id="KW-0903">Direct protein sequencing</keyword>
<keyword id="KW-0520">NAD</keyword>
<keyword id="KW-0560">Oxidoreductase</keyword>
<keyword id="KW-1185">Reference proteome</keyword>
<name>LDHD_LACDA</name>
<evidence type="ECO:0000269" key="1">
    <source>
    </source>
</evidence>
<evidence type="ECO:0000269" key="2">
    <source>
    </source>
</evidence>
<evidence type="ECO:0000305" key="3"/>
<evidence type="ECO:0000305" key="4">
    <source>
    </source>
</evidence>
<evidence type="ECO:0000305" key="5">
    <source>
    </source>
</evidence>
<evidence type="ECO:0007744" key="6">
    <source>
        <dbReference type="PDB" id="1J49"/>
    </source>
</evidence>
<evidence type="ECO:0007829" key="7">
    <source>
        <dbReference type="PDB" id="1J4A"/>
    </source>
</evidence>
<sequence>MTKIFAYAIREDEKPFLKEWEDAHKDVEVEYTDKLLTPETVALAKGADGVVVYQQLDYTAETLQALADNGITKMSLRNVGVDNIDMAKAKELGFQITNVPVYSPNAIAEHAAIQAARILRQDKAMDEKVARHDLRWAPTIGREVRDQVVGVIGTGHIGQVFMQIMEGFGAKVIAYDIFRNPELEKKGYYVDSLDDLYKQADVISLHVPDVPANVHMINDESIAKMKQDVVIVNVSRGPLVDTDAVIRGLDSGKIFGYAMDVYEGEVGIFNEDWEGKEFPDARLADLIARPNVLVTPHTAFYTTHAVRNMVVKAFDNNLELVEGKEAETPVKVG</sequence>
<dbReference type="EC" id="1.1.1.28"/>
<dbReference type="EMBL" id="X60220">
    <property type="protein sequence ID" value="CAA42781.1"/>
    <property type="molecule type" value="Genomic_DNA"/>
</dbReference>
<dbReference type="EMBL" id="M85224">
    <property type="protein sequence ID" value="AAA25246.1"/>
    <property type="molecule type" value="Genomic_DNA"/>
</dbReference>
<dbReference type="EMBL" id="CR954253">
    <property type="protein sequence ID" value="CAI96942.1"/>
    <property type="molecule type" value="Genomic_DNA"/>
</dbReference>
<dbReference type="PIR" id="A38094">
    <property type="entry name" value="A38094"/>
</dbReference>
<dbReference type="RefSeq" id="WP_011543503.1">
    <property type="nucleotide sequence ID" value="NC_008054.1"/>
</dbReference>
<dbReference type="PDB" id="1J49">
    <property type="method" value="X-ray"/>
    <property type="resolution" value="2.20 A"/>
    <property type="chains" value="A/B=1-333"/>
</dbReference>
<dbReference type="PDB" id="1J4A">
    <property type="method" value="X-ray"/>
    <property type="resolution" value="1.90 A"/>
    <property type="chains" value="A/B/C/D=1-333"/>
</dbReference>
<dbReference type="PDBsum" id="1J49"/>
<dbReference type="PDBsum" id="1J4A"/>
<dbReference type="SMR" id="P26297"/>
<dbReference type="STRING" id="390333.Ldb0101"/>
<dbReference type="KEGG" id="ldb:Ldb0101"/>
<dbReference type="PATRIC" id="fig|390333.13.peg.1571"/>
<dbReference type="eggNOG" id="COG1052">
    <property type="taxonomic scope" value="Bacteria"/>
</dbReference>
<dbReference type="HOGENOM" id="CLU_019796_1_1_9"/>
<dbReference type="BioCyc" id="LDEL390333:LDB_RS00400-MONOMER"/>
<dbReference type="BRENDA" id="1.1.1.28">
    <property type="organism ID" value="2853"/>
</dbReference>
<dbReference type="SABIO-RK" id="P26297"/>
<dbReference type="EvolutionaryTrace" id="P26297"/>
<dbReference type="Proteomes" id="UP000001259">
    <property type="component" value="Chromosome"/>
</dbReference>
<dbReference type="GO" id="GO:0008720">
    <property type="term" value="F:D-lactate dehydrogenase activity"/>
    <property type="evidence" value="ECO:0000314"/>
    <property type="project" value="UniProt"/>
</dbReference>
<dbReference type="GO" id="GO:0051287">
    <property type="term" value="F:NAD binding"/>
    <property type="evidence" value="ECO:0007669"/>
    <property type="project" value="InterPro"/>
</dbReference>
<dbReference type="GO" id="GO:0006089">
    <property type="term" value="P:lactate metabolic process"/>
    <property type="evidence" value="ECO:0000314"/>
    <property type="project" value="UniProt"/>
</dbReference>
<dbReference type="CDD" id="cd12186">
    <property type="entry name" value="LDH"/>
    <property type="match status" value="1"/>
</dbReference>
<dbReference type="Gene3D" id="3.40.50.720">
    <property type="entry name" value="NAD(P)-binding Rossmann-like Domain"/>
    <property type="match status" value="2"/>
</dbReference>
<dbReference type="InterPro" id="IPR006139">
    <property type="entry name" value="D-isomer_2_OHA_DH_cat_dom"/>
</dbReference>
<dbReference type="InterPro" id="IPR029753">
    <property type="entry name" value="D-isomer_DH_CS"/>
</dbReference>
<dbReference type="InterPro" id="IPR029752">
    <property type="entry name" value="D-isomer_DH_CS1"/>
</dbReference>
<dbReference type="InterPro" id="IPR006140">
    <property type="entry name" value="D-isomer_DH_NAD-bd"/>
</dbReference>
<dbReference type="InterPro" id="IPR036291">
    <property type="entry name" value="NAD(P)-bd_dom_sf"/>
</dbReference>
<dbReference type="PANTHER" id="PTHR43026">
    <property type="entry name" value="2-HYDROXYACID DEHYDROGENASE HOMOLOG 1-RELATED"/>
    <property type="match status" value="1"/>
</dbReference>
<dbReference type="PANTHER" id="PTHR43026:SF1">
    <property type="entry name" value="2-HYDROXYACID DEHYDROGENASE HOMOLOG 1-RELATED"/>
    <property type="match status" value="1"/>
</dbReference>
<dbReference type="Pfam" id="PF00389">
    <property type="entry name" value="2-Hacid_dh"/>
    <property type="match status" value="1"/>
</dbReference>
<dbReference type="Pfam" id="PF02826">
    <property type="entry name" value="2-Hacid_dh_C"/>
    <property type="match status" value="1"/>
</dbReference>
<dbReference type="SUPFAM" id="SSF52283">
    <property type="entry name" value="Formate/glycerate dehydrogenase catalytic domain-like"/>
    <property type="match status" value="1"/>
</dbReference>
<dbReference type="SUPFAM" id="SSF51735">
    <property type="entry name" value="NAD(P)-binding Rossmann-fold domains"/>
    <property type="match status" value="1"/>
</dbReference>
<dbReference type="PROSITE" id="PS00065">
    <property type="entry name" value="D_2_HYDROXYACID_DH_1"/>
    <property type="match status" value="1"/>
</dbReference>
<dbReference type="PROSITE" id="PS00670">
    <property type="entry name" value="D_2_HYDROXYACID_DH_2"/>
    <property type="match status" value="1"/>
</dbReference>
<dbReference type="PROSITE" id="PS00671">
    <property type="entry name" value="D_2_HYDROXYACID_DH_3"/>
    <property type="match status" value="1"/>
</dbReference>
<comment type="catalytic activity">
    <reaction>
        <text>(R)-lactate + NAD(+) = pyruvate + NADH + H(+)</text>
        <dbReference type="Rhea" id="RHEA:16369"/>
        <dbReference type="ChEBI" id="CHEBI:15361"/>
        <dbReference type="ChEBI" id="CHEBI:15378"/>
        <dbReference type="ChEBI" id="CHEBI:16004"/>
        <dbReference type="ChEBI" id="CHEBI:57540"/>
        <dbReference type="ChEBI" id="CHEBI:57945"/>
        <dbReference type="EC" id="1.1.1.28"/>
    </reaction>
</comment>
<comment type="subunit">
    <text evidence="1">Homodimer.</text>
</comment>
<comment type="similarity">
    <text evidence="3">Belongs to the D-isomer specific 2-hydroxyacid dehydrogenase family.</text>
</comment>